<name>RNJ_MYCTO</name>
<sequence length="558" mass="59533">MDVDLPPPGPLTSGGLRVTALGGINEIGRNMTVFEHLGRLLIIDCGVLFPGHDEPGVDLILPDMRHVEDRLDDIEALVLTHGHEDHIGAIPFLLKLRPDIPVVGSKFTLALVAEKCREYRITPVFVEVREGQSTRHGVFECEYFAVNHSTPDALAIAVYTGAGTILHTGDIKFDQLPPDGRPTDLPGMSRLGDTGVDLLLCDSTNAEIPGVGPSESEVGPTLHRLIRGADGRVIVACFASNVDRVQQIIDAAVALGRRVSFVGRSMVRNMRVARQLGFLRVADSDLIDIAAAETMAPDQVVLITTGTQGEPMSALSRMSRGEHRSITLTAGDLIVLSSSLIPGNEEAVFGVIDALSKIGARVVTNAQARVHVSGHAYAGELLFLYNGVRPRNVMPVHGTWRMLRANAKLAASTGVPQESILLAENGVSVDLVAGKASISGAVPVGKMFVDGLIAGDVGDITLGERLILSSGFVAVTVVVRRGTGQPLAAPHLHSRGFSEDPKALEPAVRKVEAELESLVAANVTDPIRIAQGVRRTVGKWVGETYRRQPMIVPTVIEV</sequence>
<proteinExistence type="inferred from homology"/>
<gene>
    <name evidence="2" type="primary">rnj</name>
    <name type="ordered locus">MT2822</name>
</gene>
<accession>P9WGZ8</accession>
<accession>L0TAS3</accession>
<accession>O33294</accession>
<accession>Q7D6N2</accession>
<comment type="function">
    <text evidence="1">An RNase that has 5'-3' exonuclease and possibly endoonuclease activity. Involved in maturation of rRNA and in some organisms also mRNA maturation and/or decay (By similarity).</text>
</comment>
<comment type="cofactor">
    <cofactor evidence="2">
        <name>Zn(2+)</name>
        <dbReference type="ChEBI" id="CHEBI:29105"/>
    </cofactor>
    <text evidence="2">Binds up to 2 Zn(2+) ions per subunit. It is not clear if Zn(2+) or Mg(2+) is physiologically important.</text>
</comment>
<comment type="subunit">
    <text evidence="2">Homodimer, may be a subunit of the RNA degradosome.</text>
</comment>
<comment type="subcellular location">
    <subcellularLocation>
        <location evidence="2">Cytoplasm</location>
    </subcellularLocation>
</comment>
<comment type="similarity">
    <text evidence="2">Belongs to the metallo-beta-lactamase superfamily. RNA-metabolizing metallo-beta-lactamase-like family. Bacterial RNase J subfamily.</text>
</comment>
<evidence type="ECO:0000250" key="1"/>
<evidence type="ECO:0000255" key="2">
    <source>
        <dbReference type="HAMAP-Rule" id="MF_01491"/>
    </source>
</evidence>
<keyword id="KW-0963">Cytoplasm</keyword>
<keyword id="KW-0255">Endonuclease</keyword>
<keyword id="KW-0269">Exonuclease</keyword>
<keyword id="KW-0378">Hydrolase</keyword>
<keyword id="KW-0479">Metal-binding</keyword>
<keyword id="KW-0540">Nuclease</keyword>
<keyword id="KW-1185">Reference proteome</keyword>
<keyword id="KW-0694">RNA-binding</keyword>
<keyword id="KW-0698">rRNA processing</keyword>
<keyword id="KW-0862">Zinc</keyword>
<dbReference type="EC" id="3.1.-.-" evidence="2"/>
<dbReference type="EMBL" id="AE000516">
    <property type="protein sequence ID" value="AAK47141.1"/>
    <property type="molecule type" value="Genomic_DNA"/>
</dbReference>
<dbReference type="PIR" id="G70879">
    <property type="entry name" value="G70879"/>
</dbReference>
<dbReference type="RefSeq" id="WP_003414049.1">
    <property type="nucleotide sequence ID" value="NZ_KK341227.1"/>
</dbReference>
<dbReference type="SMR" id="P9WGZ8"/>
<dbReference type="KEGG" id="mtc:MT2822"/>
<dbReference type="PATRIC" id="fig|83331.31.peg.3043"/>
<dbReference type="HOGENOM" id="CLU_008727_3_1_11"/>
<dbReference type="Proteomes" id="UP000001020">
    <property type="component" value="Chromosome"/>
</dbReference>
<dbReference type="GO" id="GO:0005737">
    <property type="term" value="C:cytoplasm"/>
    <property type="evidence" value="ECO:0007669"/>
    <property type="project" value="UniProtKB-SubCell"/>
</dbReference>
<dbReference type="GO" id="GO:0004534">
    <property type="term" value="F:5'-3' RNA exonuclease activity"/>
    <property type="evidence" value="ECO:0007669"/>
    <property type="project" value="UniProtKB-UniRule"/>
</dbReference>
<dbReference type="GO" id="GO:0003723">
    <property type="term" value="F:RNA binding"/>
    <property type="evidence" value="ECO:0007669"/>
    <property type="project" value="UniProtKB-UniRule"/>
</dbReference>
<dbReference type="GO" id="GO:0004521">
    <property type="term" value="F:RNA endonuclease activity"/>
    <property type="evidence" value="ECO:0007669"/>
    <property type="project" value="UniProtKB-UniRule"/>
</dbReference>
<dbReference type="GO" id="GO:0008270">
    <property type="term" value="F:zinc ion binding"/>
    <property type="evidence" value="ECO:0007669"/>
    <property type="project" value="InterPro"/>
</dbReference>
<dbReference type="GO" id="GO:0006364">
    <property type="term" value="P:rRNA processing"/>
    <property type="evidence" value="ECO:0007669"/>
    <property type="project" value="UniProtKB-UniRule"/>
</dbReference>
<dbReference type="CDD" id="cd07714">
    <property type="entry name" value="RNaseJ_MBL-fold"/>
    <property type="match status" value="1"/>
</dbReference>
<dbReference type="FunFam" id="3.40.50.10710:FF:000001">
    <property type="entry name" value="Ribonuclease J"/>
    <property type="match status" value="1"/>
</dbReference>
<dbReference type="Gene3D" id="3.10.20.580">
    <property type="match status" value="1"/>
</dbReference>
<dbReference type="Gene3D" id="3.40.50.10710">
    <property type="entry name" value="Metallo-hydrolase/oxidoreductase"/>
    <property type="match status" value="1"/>
</dbReference>
<dbReference type="Gene3D" id="3.60.15.10">
    <property type="entry name" value="Ribonuclease Z/Hydroxyacylglutathione hydrolase-like"/>
    <property type="match status" value="1"/>
</dbReference>
<dbReference type="HAMAP" id="MF_01491">
    <property type="entry name" value="RNase_J_bact"/>
    <property type="match status" value="1"/>
</dbReference>
<dbReference type="InterPro" id="IPR001279">
    <property type="entry name" value="Metallo-B-lactamas"/>
</dbReference>
<dbReference type="InterPro" id="IPR036866">
    <property type="entry name" value="RibonucZ/Hydroxyglut_hydro"/>
</dbReference>
<dbReference type="InterPro" id="IPR011108">
    <property type="entry name" value="RMMBL"/>
</dbReference>
<dbReference type="InterPro" id="IPR004613">
    <property type="entry name" value="RNase_J"/>
</dbReference>
<dbReference type="InterPro" id="IPR042173">
    <property type="entry name" value="RNase_J_2"/>
</dbReference>
<dbReference type="InterPro" id="IPR055132">
    <property type="entry name" value="RNase_J_b_CASP"/>
</dbReference>
<dbReference type="InterPro" id="IPR030854">
    <property type="entry name" value="RNase_J_bac"/>
</dbReference>
<dbReference type="InterPro" id="IPR041636">
    <property type="entry name" value="RNase_J_C"/>
</dbReference>
<dbReference type="NCBIfam" id="TIGR00649">
    <property type="entry name" value="MG423"/>
    <property type="match status" value="1"/>
</dbReference>
<dbReference type="PANTHER" id="PTHR43694">
    <property type="entry name" value="RIBONUCLEASE J"/>
    <property type="match status" value="1"/>
</dbReference>
<dbReference type="PANTHER" id="PTHR43694:SF1">
    <property type="entry name" value="RIBONUCLEASE J"/>
    <property type="match status" value="1"/>
</dbReference>
<dbReference type="Pfam" id="PF12706">
    <property type="entry name" value="Lactamase_B_2"/>
    <property type="match status" value="1"/>
</dbReference>
<dbReference type="Pfam" id="PF07521">
    <property type="entry name" value="RMMBL"/>
    <property type="match status" value="1"/>
</dbReference>
<dbReference type="Pfam" id="PF22505">
    <property type="entry name" value="RNase_J_b_CASP"/>
    <property type="match status" value="1"/>
</dbReference>
<dbReference type="Pfam" id="PF17770">
    <property type="entry name" value="RNase_J_C"/>
    <property type="match status" value="1"/>
</dbReference>
<dbReference type="PIRSF" id="PIRSF004803">
    <property type="entry name" value="RnjA"/>
    <property type="match status" value="1"/>
</dbReference>
<dbReference type="SMART" id="SM00849">
    <property type="entry name" value="Lactamase_B"/>
    <property type="match status" value="1"/>
</dbReference>
<dbReference type="SUPFAM" id="SSF56281">
    <property type="entry name" value="Metallo-hydrolase/oxidoreductase"/>
    <property type="match status" value="1"/>
</dbReference>
<organism>
    <name type="scientific">Mycobacterium tuberculosis (strain CDC 1551 / Oshkosh)</name>
    <dbReference type="NCBI Taxonomy" id="83331"/>
    <lineage>
        <taxon>Bacteria</taxon>
        <taxon>Bacillati</taxon>
        <taxon>Actinomycetota</taxon>
        <taxon>Actinomycetes</taxon>
        <taxon>Mycobacteriales</taxon>
        <taxon>Mycobacteriaceae</taxon>
        <taxon>Mycobacterium</taxon>
        <taxon>Mycobacterium tuberculosis complex</taxon>
    </lineage>
</organism>
<reference key="1">
    <citation type="journal article" date="2002" name="J. Bacteriol.">
        <title>Whole-genome comparison of Mycobacterium tuberculosis clinical and laboratory strains.</title>
        <authorList>
            <person name="Fleischmann R.D."/>
            <person name="Alland D."/>
            <person name="Eisen J.A."/>
            <person name="Carpenter L."/>
            <person name="White O."/>
            <person name="Peterson J.D."/>
            <person name="DeBoy R.T."/>
            <person name="Dodson R.J."/>
            <person name="Gwinn M.L."/>
            <person name="Haft D.H."/>
            <person name="Hickey E.K."/>
            <person name="Kolonay J.F."/>
            <person name="Nelson W.C."/>
            <person name="Umayam L.A."/>
            <person name="Ermolaeva M.D."/>
            <person name="Salzberg S.L."/>
            <person name="Delcher A."/>
            <person name="Utterback T.R."/>
            <person name="Weidman J.F."/>
            <person name="Khouri H.M."/>
            <person name="Gill J."/>
            <person name="Mikula A."/>
            <person name="Bishai W."/>
            <person name="Jacobs W.R. Jr."/>
            <person name="Venter J.C."/>
            <person name="Fraser C.M."/>
        </authorList>
    </citation>
    <scope>NUCLEOTIDE SEQUENCE [LARGE SCALE GENOMIC DNA]</scope>
    <source>
        <strain>CDC 1551 / Oshkosh</strain>
    </source>
</reference>
<protein>
    <recommendedName>
        <fullName evidence="2">Ribonuclease J</fullName>
        <shortName evidence="2">RNase J</shortName>
        <ecNumber evidence="2">3.1.-.-</ecNumber>
    </recommendedName>
</protein>
<feature type="chain" id="PRO_0000428274" description="Ribonuclease J">
    <location>
        <begin position="1"/>
        <end position="558"/>
    </location>
</feature>
<feature type="binding site" evidence="2">
    <location>
        <position position="81"/>
    </location>
    <ligand>
        <name>Zn(2+)</name>
        <dbReference type="ChEBI" id="CHEBI:29105"/>
        <label>1</label>
        <note>catalytic</note>
    </ligand>
</feature>
<feature type="binding site" evidence="2">
    <location>
        <position position="83"/>
    </location>
    <ligand>
        <name>Zn(2+)</name>
        <dbReference type="ChEBI" id="CHEBI:29105"/>
        <label>1</label>
        <note>catalytic</note>
    </ligand>
</feature>
<feature type="binding site" evidence="2">
    <location>
        <position position="85"/>
    </location>
    <ligand>
        <name>Zn(2+)</name>
        <dbReference type="ChEBI" id="CHEBI:29105"/>
        <label>2</label>
        <note>catalytic</note>
    </ligand>
</feature>
<feature type="binding site" evidence="2">
    <location>
        <position position="86"/>
    </location>
    <ligand>
        <name>Zn(2+)</name>
        <dbReference type="ChEBI" id="CHEBI:29105"/>
        <label>2</label>
        <note>catalytic</note>
    </ligand>
</feature>
<feature type="binding site" evidence="2">
    <location>
        <position position="148"/>
    </location>
    <ligand>
        <name>Zn(2+)</name>
        <dbReference type="ChEBI" id="CHEBI:29105"/>
        <label>1</label>
        <note>catalytic</note>
    </ligand>
</feature>
<feature type="binding site" evidence="2">
    <location>
        <position position="170"/>
    </location>
    <ligand>
        <name>Zn(2+)</name>
        <dbReference type="ChEBI" id="CHEBI:29105"/>
        <label>1</label>
        <note>catalytic</note>
    </ligand>
</feature>
<feature type="binding site" evidence="2">
    <location>
        <position position="170"/>
    </location>
    <ligand>
        <name>Zn(2+)</name>
        <dbReference type="ChEBI" id="CHEBI:29105"/>
        <label>2</label>
        <note>catalytic</note>
    </ligand>
</feature>
<feature type="binding site" evidence="2">
    <location>
        <begin position="371"/>
        <end position="375"/>
    </location>
    <ligand>
        <name>substrate</name>
    </ligand>
</feature>
<feature type="binding site" evidence="2">
    <location>
        <position position="397"/>
    </location>
    <ligand>
        <name>Zn(2+)</name>
        <dbReference type="ChEBI" id="CHEBI:29105"/>
        <label>2</label>
        <note>catalytic</note>
    </ligand>
</feature>